<organism>
    <name type="scientific">Parasynechococcus marenigrum (strain WH8102)</name>
    <dbReference type="NCBI Taxonomy" id="84588"/>
    <lineage>
        <taxon>Bacteria</taxon>
        <taxon>Bacillati</taxon>
        <taxon>Cyanobacteriota</taxon>
        <taxon>Cyanophyceae</taxon>
        <taxon>Synechococcales</taxon>
        <taxon>Prochlorococcaceae</taxon>
        <taxon>Parasynechococcus</taxon>
        <taxon>Parasynechococcus marenigrum</taxon>
    </lineage>
</organism>
<comment type="function">
    <text evidence="2">Involved in base excision repair of DNA damaged by oxidation or by mutagenic agents. Acts as a DNA glycosylase that recognizes and removes damaged bases. Has a preference for oxidized purines, such as 7,8-dihydro-8-oxoguanine (8-oxoG). Has AP (apurinic/apyrimidinic) lyase activity and introduces nicks in the DNA strand. Cleaves the DNA backbone by beta-delta elimination to generate a single-strand break at the site of the removed base with both 3'- and 5'-phosphates.</text>
</comment>
<comment type="catalytic activity">
    <reaction evidence="2">
        <text>Hydrolysis of DNA containing ring-opened 7-methylguanine residues, releasing 2,6-diamino-4-hydroxy-5-(N-methyl)formamidopyrimidine.</text>
        <dbReference type="EC" id="3.2.2.23"/>
    </reaction>
</comment>
<comment type="catalytic activity">
    <reaction evidence="2">
        <text>2'-deoxyribonucleotide-(2'-deoxyribose 5'-phosphate)-2'-deoxyribonucleotide-DNA = a 3'-end 2'-deoxyribonucleotide-(2,3-dehydro-2,3-deoxyribose 5'-phosphate)-DNA + a 5'-end 5'-phospho-2'-deoxyribonucleoside-DNA + H(+)</text>
        <dbReference type="Rhea" id="RHEA:66592"/>
        <dbReference type="Rhea" id="RHEA-COMP:13180"/>
        <dbReference type="Rhea" id="RHEA-COMP:16897"/>
        <dbReference type="Rhea" id="RHEA-COMP:17067"/>
        <dbReference type="ChEBI" id="CHEBI:15378"/>
        <dbReference type="ChEBI" id="CHEBI:136412"/>
        <dbReference type="ChEBI" id="CHEBI:157695"/>
        <dbReference type="ChEBI" id="CHEBI:167181"/>
        <dbReference type="EC" id="4.2.99.18"/>
    </reaction>
</comment>
<comment type="cofactor">
    <cofactor evidence="2">
        <name>Zn(2+)</name>
        <dbReference type="ChEBI" id="CHEBI:29105"/>
    </cofactor>
    <text evidence="2">Binds 1 zinc ion per subunit.</text>
</comment>
<comment type="subunit">
    <text evidence="2">Monomer.</text>
</comment>
<comment type="similarity">
    <text evidence="2">Belongs to the FPG family.</text>
</comment>
<name>FPG_PARMW</name>
<sequence length="278" mass="30657">MPELPEVETVRRGLADRLSLFEIERVEVCRSRAIASSGGVAAFLVGLTGARVGTWSRRGKYLMAALEPNRGIWGVHLRMTGQFQWIEEPSTPCTHTRVRFWNANGHELRFVDVRSFGEMWWVPPDVELTVGIPGLARLGPEPFSEAFSAPYLKRQLKNSSRPIKTALLDQALVAGVGNIYADESLFSAGIPPLTPAGRLTLAQLERLRSSLVEVLTTSIGAGGTTFSDFRDLEGVNGNYGGQAWVYRRGGEPCRRCGTIIRRDKLSGRSTHWCPTCQG</sequence>
<keyword id="KW-0227">DNA damage</keyword>
<keyword id="KW-0234">DNA repair</keyword>
<keyword id="KW-0238">DNA-binding</keyword>
<keyword id="KW-0326">Glycosidase</keyword>
<keyword id="KW-0378">Hydrolase</keyword>
<keyword id="KW-0456">Lyase</keyword>
<keyword id="KW-0479">Metal-binding</keyword>
<keyword id="KW-0511">Multifunctional enzyme</keyword>
<keyword id="KW-0862">Zinc</keyword>
<keyword id="KW-0863">Zinc-finger</keyword>
<accession>Q7U4V2</accession>
<dbReference type="EC" id="3.2.2.23" evidence="2"/>
<dbReference type="EC" id="4.2.99.18" evidence="2"/>
<dbReference type="EMBL" id="BX569694">
    <property type="protein sequence ID" value="CAE08476.1"/>
    <property type="molecule type" value="Genomic_DNA"/>
</dbReference>
<dbReference type="RefSeq" id="WP_011128819.1">
    <property type="nucleotide sequence ID" value="NC_005070.1"/>
</dbReference>
<dbReference type="SMR" id="Q7U4V2"/>
<dbReference type="STRING" id="84588.SYNW1961"/>
<dbReference type="KEGG" id="syw:SYNW1961"/>
<dbReference type="eggNOG" id="COG0266">
    <property type="taxonomic scope" value="Bacteria"/>
</dbReference>
<dbReference type="HOGENOM" id="CLU_038423_1_2_3"/>
<dbReference type="Proteomes" id="UP000001422">
    <property type="component" value="Chromosome"/>
</dbReference>
<dbReference type="GO" id="GO:0034039">
    <property type="term" value="F:8-oxo-7,8-dihydroguanine DNA N-glycosylase activity"/>
    <property type="evidence" value="ECO:0007669"/>
    <property type="project" value="TreeGrafter"/>
</dbReference>
<dbReference type="GO" id="GO:0140078">
    <property type="term" value="F:class I DNA-(apurinic or apyrimidinic site) endonuclease activity"/>
    <property type="evidence" value="ECO:0007669"/>
    <property type="project" value="UniProtKB-EC"/>
</dbReference>
<dbReference type="GO" id="GO:0003684">
    <property type="term" value="F:damaged DNA binding"/>
    <property type="evidence" value="ECO:0007669"/>
    <property type="project" value="InterPro"/>
</dbReference>
<dbReference type="GO" id="GO:0008270">
    <property type="term" value="F:zinc ion binding"/>
    <property type="evidence" value="ECO:0007669"/>
    <property type="project" value="UniProtKB-UniRule"/>
</dbReference>
<dbReference type="GO" id="GO:0006284">
    <property type="term" value="P:base-excision repair"/>
    <property type="evidence" value="ECO:0007669"/>
    <property type="project" value="InterPro"/>
</dbReference>
<dbReference type="CDD" id="cd08966">
    <property type="entry name" value="EcFpg-like_N"/>
    <property type="match status" value="1"/>
</dbReference>
<dbReference type="FunFam" id="1.10.8.50:FF:000003">
    <property type="entry name" value="Formamidopyrimidine-DNA glycosylase"/>
    <property type="match status" value="1"/>
</dbReference>
<dbReference type="Gene3D" id="1.10.8.50">
    <property type="match status" value="1"/>
</dbReference>
<dbReference type="Gene3D" id="3.20.190.10">
    <property type="entry name" value="MutM-like, N-terminal"/>
    <property type="match status" value="1"/>
</dbReference>
<dbReference type="HAMAP" id="MF_00103">
    <property type="entry name" value="Fapy_DNA_glycosyl"/>
    <property type="match status" value="1"/>
</dbReference>
<dbReference type="InterPro" id="IPR015886">
    <property type="entry name" value="DNA_glyclase/AP_lyase_DNA-bd"/>
</dbReference>
<dbReference type="InterPro" id="IPR015887">
    <property type="entry name" value="DNA_glyclase_Znf_dom_DNA_BS"/>
</dbReference>
<dbReference type="InterPro" id="IPR020629">
    <property type="entry name" value="Formamido-pyr_DNA_Glyclase"/>
</dbReference>
<dbReference type="InterPro" id="IPR012319">
    <property type="entry name" value="FPG_cat"/>
</dbReference>
<dbReference type="InterPro" id="IPR035937">
    <property type="entry name" value="MutM-like_N-ter"/>
</dbReference>
<dbReference type="InterPro" id="IPR010979">
    <property type="entry name" value="Ribosomal_uS13-like_H2TH"/>
</dbReference>
<dbReference type="InterPro" id="IPR000214">
    <property type="entry name" value="Znf_DNA_glyclase/AP_lyase"/>
</dbReference>
<dbReference type="InterPro" id="IPR010663">
    <property type="entry name" value="Znf_FPG/IleRS"/>
</dbReference>
<dbReference type="NCBIfam" id="TIGR00577">
    <property type="entry name" value="fpg"/>
    <property type="match status" value="1"/>
</dbReference>
<dbReference type="NCBIfam" id="NF002211">
    <property type="entry name" value="PRK01103.1"/>
    <property type="match status" value="1"/>
</dbReference>
<dbReference type="NCBIfam" id="NF010551">
    <property type="entry name" value="PRK13945.1"/>
    <property type="match status" value="1"/>
</dbReference>
<dbReference type="PANTHER" id="PTHR22993">
    <property type="entry name" value="FORMAMIDOPYRIMIDINE-DNA GLYCOSYLASE"/>
    <property type="match status" value="1"/>
</dbReference>
<dbReference type="PANTHER" id="PTHR22993:SF9">
    <property type="entry name" value="FORMAMIDOPYRIMIDINE-DNA GLYCOSYLASE"/>
    <property type="match status" value="1"/>
</dbReference>
<dbReference type="Pfam" id="PF01149">
    <property type="entry name" value="Fapy_DNA_glyco"/>
    <property type="match status" value="1"/>
</dbReference>
<dbReference type="Pfam" id="PF06831">
    <property type="entry name" value="H2TH"/>
    <property type="match status" value="1"/>
</dbReference>
<dbReference type="Pfam" id="PF06827">
    <property type="entry name" value="zf-FPG_IleRS"/>
    <property type="match status" value="1"/>
</dbReference>
<dbReference type="SMART" id="SM00898">
    <property type="entry name" value="Fapy_DNA_glyco"/>
    <property type="match status" value="1"/>
</dbReference>
<dbReference type="SMART" id="SM01232">
    <property type="entry name" value="H2TH"/>
    <property type="match status" value="1"/>
</dbReference>
<dbReference type="SUPFAM" id="SSF57716">
    <property type="entry name" value="Glucocorticoid receptor-like (DNA-binding domain)"/>
    <property type="match status" value="1"/>
</dbReference>
<dbReference type="SUPFAM" id="SSF81624">
    <property type="entry name" value="N-terminal domain of MutM-like DNA repair proteins"/>
    <property type="match status" value="1"/>
</dbReference>
<dbReference type="SUPFAM" id="SSF46946">
    <property type="entry name" value="S13-like H2TH domain"/>
    <property type="match status" value="1"/>
</dbReference>
<dbReference type="PROSITE" id="PS51068">
    <property type="entry name" value="FPG_CAT"/>
    <property type="match status" value="1"/>
</dbReference>
<dbReference type="PROSITE" id="PS01242">
    <property type="entry name" value="ZF_FPG_1"/>
    <property type="match status" value="1"/>
</dbReference>
<dbReference type="PROSITE" id="PS51066">
    <property type="entry name" value="ZF_FPG_2"/>
    <property type="match status" value="1"/>
</dbReference>
<feature type="initiator methionine" description="Removed" evidence="1">
    <location>
        <position position="1"/>
    </location>
</feature>
<feature type="chain" id="PRO_0000170878" description="Formamidopyrimidine-DNA glycosylase">
    <location>
        <begin position="2"/>
        <end position="278"/>
    </location>
</feature>
<feature type="zinc finger region" description="FPG-type" evidence="2">
    <location>
        <begin position="244"/>
        <end position="278"/>
    </location>
</feature>
<feature type="active site" description="Schiff-base intermediate with DNA" evidence="2">
    <location>
        <position position="2"/>
    </location>
</feature>
<feature type="active site" description="Proton donor" evidence="2">
    <location>
        <position position="3"/>
    </location>
</feature>
<feature type="active site" description="Proton donor; for beta-elimination activity" evidence="2">
    <location>
        <position position="60"/>
    </location>
</feature>
<feature type="active site" description="Proton donor; for delta-elimination activity" evidence="2">
    <location>
        <position position="268"/>
    </location>
</feature>
<feature type="binding site" evidence="2">
    <location>
        <position position="95"/>
    </location>
    <ligand>
        <name>DNA</name>
        <dbReference type="ChEBI" id="CHEBI:16991"/>
    </ligand>
</feature>
<feature type="binding site" evidence="2">
    <location>
        <position position="114"/>
    </location>
    <ligand>
        <name>DNA</name>
        <dbReference type="ChEBI" id="CHEBI:16991"/>
    </ligand>
</feature>
<protein>
    <recommendedName>
        <fullName evidence="2">Formamidopyrimidine-DNA glycosylase</fullName>
        <shortName evidence="2">Fapy-DNA glycosylase</shortName>
        <ecNumber evidence="2">3.2.2.23</ecNumber>
    </recommendedName>
    <alternativeName>
        <fullName evidence="2">DNA-(apurinic or apyrimidinic site) lyase MutM</fullName>
        <shortName evidence="2">AP lyase MutM</shortName>
        <ecNumber evidence="2">4.2.99.18</ecNumber>
    </alternativeName>
</protein>
<gene>
    <name evidence="2" type="primary">mutM</name>
    <name evidence="2" type="synonym">fpg</name>
    <name type="ordered locus">SYNW1961</name>
</gene>
<reference key="1">
    <citation type="journal article" date="2003" name="Nature">
        <title>The genome of a motile marine Synechococcus.</title>
        <authorList>
            <person name="Palenik B."/>
            <person name="Brahamsha B."/>
            <person name="Larimer F.W."/>
            <person name="Land M.L."/>
            <person name="Hauser L."/>
            <person name="Chain P."/>
            <person name="Lamerdin J.E."/>
            <person name="Regala W."/>
            <person name="Allen E.E."/>
            <person name="McCarren J."/>
            <person name="Paulsen I.T."/>
            <person name="Dufresne A."/>
            <person name="Partensky F."/>
            <person name="Webb E.A."/>
            <person name="Waterbury J."/>
        </authorList>
    </citation>
    <scope>NUCLEOTIDE SEQUENCE [LARGE SCALE GENOMIC DNA]</scope>
    <source>
        <strain>WH8102</strain>
    </source>
</reference>
<evidence type="ECO:0000250" key="1"/>
<evidence type="ECO:0000255" key="2">
    <source>
        <dbReference type="HAMAP-Rule" id="MF_00103"/>
    </source>
</evidence>
<proteinExistence type="inferred from homology"/>